<dbReference type="EMBL" id="CP001048">
    <property type="protein sequence ID" value="ACC90815.1"/>
    <property type="molecule type" value="Genomic_DNA"/>
</dbReference>
<dbReference type="RefSeq" id="WP_002218949.1">
    <property type="nucleotide sequence ID" value="NZ_CP009780.1"/>
</dbReference>
<dbReference type="SMR" id="B2K513"/>
<dbReference type="GeneID" id="97454255"/>
<dbReference type="KEGG" id="ypb:YPTS_3866"/>
<dbReference type="PATRIC" id="fig|502801.10.peg.3331"/>
<dbReference type="GO" id="GO:0015935">
    <property type="term" value="C:small ribosomal subunit"/>
    <property type="evidence" value="ECO:0007669"/>
    <property type="project" value="InterPro"/>
</dbReference>
<dbReference type="GO" id="GO:0019843">
    <property type="term" value="F:rRNA binding"/>
    <property type="evidence" value="ECO:0007669"/>
    <property type="project" value="UniProtKB-UniRule"/>
</dbReference>
<dbReference type="GO" id="GO:0003735">
    <property type="term" value="F:structural constituent of ribosome"/>
    <property type="evidence" value="ECO:0007669"/>
    <property type="project" value="InterPro"/>
</dbReference>
<dbReference type="GO" id="GO:0042274">
    <property type="term" value="P:ribosomal small subunit biogenesis"/>
    <property type="evidence" value="ECO:0007669"/>
    <property type="project" value="TreeGrafter"/>
</dbReference>
<dbReference type="GO" id="GO:0006412">
    <property type="term" value="P:translation"/>
    <property type="evidence" value="ECO:0007669"/>
    <property type="project" value="UniProtKB-UniRule"/>
</dbReference>
<dbReference type="CDD" id="cd00165">
    <property type="entry name" value="S4"/>
    <property type="match status" value="1"/>
</dbReference>
<dbReference type="FunFam" id="1.10.1050.10:FF:000001">
    <property type="entry name" value="30S ribosomal protein S4"/>
    <property type="match status" value="1"/>
</dbReference>
<dbReference type="FunFam" id="3.10.290.10:FF:000001">
    <property type="entry name" value="30S ribosomal protein S4"/>
    <property type="match status" value="1"/>
</dbReference>
<dbReference type="Gene3D" id="1.10.1050.10">
    <property type="entry name" value="Ribosomal Protein S4 Delta 41, Chain A, domain 1"/>
    <property type="match status" value="1"/>
</dbReference>
<dbReference type="Gene3D" id="3.10.290.10">
    <property type="entry name" value="RNA-binding S4 domain"/>
    <property type="match status" value="1"/>
</dbReference>
<dbReference type="HAMAP" id="MF_01306_B">
    <property type="entry name" value="Ribosomal_uS4_B"/>
    <property type="match status" value="1"/>
</dbReference>
<dbReference type="InterPro" id="IPR022801">
    <property type="entry name" value="Ribosomal_uS4"/>
</dbReference>
<dbReference type="InterPro" id="IPR005709">
    <property type="entry name" value="Ribosomal_uS4_bac-type"/>
</dbReference>
<dbReference type="InterPro" id="IPR018079">
    <property type="entry name" value="Ribosomal_uS4_CS"/>
</dbReference>
<dbReference type="InterPro" id="IPR001912">
    <property type="entry name" value="Ribosomal_uS4_N"/>
</dbReference>
<dbReference type="InterPro" id="IPR002942">
    <property type="entry name" value="S4_RNA-bd"/>
</dbReference>
<dbReference type="InterPro" id="IPR036986">
    <property type="entry name" value="S4_RNA-bd_sf"/>
</dbReference>
<dbReference type="NCBIfam" id="NF003717">
    <property type="entry name" value="PRK05327.1"/>
    <property type="match status" value="1"/>
</dbReference>
<dbReference type="NCBIfam" id="TIGR01017">
    <property type="entry name" value="rpsD_bact"/>
    <property type="match status" value="1"/>
</dbReference>
<dbReference type="PANTHER" id="PTHR11831">
    <property type="entry name" value="30S 40S RIBOSOMAL PROTEIN"/>
    <property type="match status" value="1"/>
</dbReference>
<dbReference type="PANTHER" id="PTHR11831:SF4">
    <property type="entry name" value="SMALL RIBOSOMAL SUBUNIT PROTEIN US4M"/>
    <property type="match status" value="1"/>
</dbReference>
<dbReference type="Pfam" id="PF00163">
    <property type="entry name" value="Ribosomal_S4"/>
    <property type="match status" value="1"/>
</dbReference>
<dbReference type="Pfam" id="PF01479">
    <property type="entry name" value="S4"/>
    <property type="match status" value="1"/>
</dbReference>
<dbReference type="SMART" id="SM01390">
    <property type="entry name" value="Ribosomal_S4"/>
    <property type="match status" value="1"/>
</dbReference>
<dbReference type="SMART" id="SM00363">
    <property type="entry name" value="S4"/>
    <property type="match status" value="1"/>
</dbReference>
<dbReference type="SUPFAM" id="SSF55174">
    <property type="entry name" value="Alpha-L RNA-binding motif"/>
    <property type="match status" value="1"/>
</dbReference>
<dbReference type="PROSITE" id="PS00632">
    <property type="entry name" value="RIBOSOMAL_S4"/>
    <property type="match status" value="1"/>
</dbReference>
<dbReference type="PROSITE" id="PS50889">
    <property type="entry name" value="S4"/>
    <property type="match status" value="1"/>
</dbReference>
<organism>
    <name type="scientific">Yersinia pseudotuberculosis serotype IB (strain PB1/+)</name>
    <dbReference type="NCBI Taxonomy" id="502801"/>
    <lineage>
        <taxon>Bacteria</taxon>
        <taxon>Pseudomonadati</taxon>
        <taxon>Pseudomonadota</taxon>
        <taxon>Gammaproteobacteria</taxon>
        <taxon>Enterobacterales</taxon>
        <taxon>Yersiniaceae</taxon>
        <taxon>Yersinia</taxon>
    </lineage>
</organism>
<comment type="function">
    <text evidence="1">One of the primary rRNA binding proteins, it binds directly to 16S rRNA where it nucleates assembly of the body of the 30S subunit.</text>
</comment>
<comment type="function">
    <text evidence="1">With S5 and S12 plays an important role in translational accuracy.</text>
</comment>
<comment type="subunit">
    <text evidence="1">Part of the 30S ribosomal subunit. Contacts protein S5. The interaction surface between S4 and S5 is involved in control of translational fidelity.</text>
</comment>
<comment type="similarity">
    <text evidence="1">Belongs to the universal ribosomal protein uS4 family.</text>
</comment>
<evidence type="ECO:0000255" key="1">
    <source>
        <dbReference type="HAMAP-Rule" id="MF_01306"/>
    </source>
</evidence>
<evidence type="ECO:0000305" key="2"/>
<gene>
    <name evidence="1" type="primary">rpsD</name>
    <name type="ordered locus">YPTS_3866</name>
</gene>
<protein>
    <recommendedName>
        <fullName evidence="1">Small ribosomal subunit protein uS4</fullName>
    </recommendedName>
    <alternativeName>
        <fullName evidence="2">30S ribosomal protein S4</fullName>
    </alternativeName>
</protein>
<proteinExistence type="inferred from homology"/>
<sequence length="206" mass="23549">MARYLGPKLKLSRREGTDLFLKSGVRAIDTKCKIEQPPGQHGARKPRLSDYGVQLREKQKVRRIYGVLERQFRNYYKEAARLKGNTGANLLQLLEGRLDNVVYRMGFGATRAESRQLVSHKAIMVNGRVVNIASYQVSPNDVVSIREKAKKQSRVKAALELAEQREKPTWLEVDAVKMEGVFKRIPERTDLSADINEHLIVELYSK</sequence>
<name>RS4_YERPB</name>
<keyword id="KW-0687">Ribonucleoprotein</keyword>
<keyword id="KW-0689">Ribosomal protein</keyword>
<keyword id="KW-0694">RNA-binding</keyword>
<keyword id="KW-0699">rRNA-binding</keyword>
<feature type="chain" id="PRO_1000140822" description="Small ribosomal subunit protein uS4">
    <location>
        <begin position="1"/>
        <end position="206"/>
    </location>
</feature>
<feature type="domain" description="S4 RNA-binding" evidence="1">
    <location>
        <begin position="96"/>
        <end position="156"/>
    </location>
</feature>
<reference key="1">
    <citation type="submission" date="2008-04" db="EMBL/GenBank/DDBJ databases">
        <title>Complete sequence of Yersinia pseudotuberculosis PB1/+.</title>
        <authorList>
            <person name="Copeland A."/>
            <person name="Lucas S."/>
            <person name="Lapidus A."/>
            <person name="Glavina del Rio T."/>
            <person name="Dalin E."/>
            <person name="Tice H."/>
            <person name="Bruce D."/>
            <person name="Goodwin L."/>
            <person name="Pitluck S."/>
            <person name="Munk A.C."/>
            <person name="Brettin T."/>
            <person name="Detter J.C."/>
            <person name="Han C."/>
            <person name="Tapia R."/>
            <person name="Schmutz J."/>
            <person name="Larimer F."/>
            <person name="Land M."/>
            <person name="Hauser L."/>
            <person name="Challacombe J.F."/>
            <person name="Green L."/>
            <person name="Lindler L.E."/>
            <person name="Nikolich M.P."/>
            <person name="Richardson P."/>
        </authorList>
    </citation>
    <scope>NUCLEOTIDE SEQUENCE [LARGE SCALE GENOMIC DNA]</scope>
    <source>
        <strain>PB1/+</strain>
    </source>
</reference>
<accession>B2K513</accession>